<geneLocation type="chloroplast"/>
<organism>
    <name type="scientific">Coffea arabica</name>
    <name type="common">Arabian coffee</name>
    <dbReference type="NCBI Taxonomy" id="13443"/>
    <lineage>
        <taxon>Eukaryota</taxon>
        <taxon>Viridiplantae</taxon>
        <taxon>Streptophyta</taxon>
        <taxon>Embryophyta</taxon>
        <taxon>Tracheophyta</taxon>
        <taxon>Spermatophyta</taxon>
        <taxon>Magnoliopsida</taxon>
        <taxon>eudicotyledons</taxon>
        <taxon>Gunneridae</taxon>
        <taxon>Pentapetalae</taxon>
        <taxon>asterids</taxon>
        <taxon>lamiids</taxon>
        <taxon>Gentianales</taxon>
        <taxon>Rubiaceae</taxon>
        <taxon>Ixoroideae</taxon>
        <taxon>Gardenieae complex</taxon>
        <taxon>Bertiereae - Coffeeae clade</taxon>
        <taxon>Coffeeae</taxon>
        <taxon>Coffea</taxon>
    </lineage>
</organism>
<gene>
    <name evidence="2" type="primary">psbH</name>
</gene>
<name>PSBH_COFAR</name>
<protein>
    <recommendedName>
        <fullName evidence="2">Photosystem II reaction center protein H</fullName>
        <shortName evidence="2">PSII-H</shortName>
    </recommendedName>
    <alternativeName>
        <fullName evidence="2">Photosystem II 10 kDa phosphoprotein</fullName>
    </alternativeName>
</protein>
<reference key="1">
    <citation type="journal article" date="2007" name="Plant Biotechnol. J.">
        <title>The complete nucleotide sequence of the coffee (Coffea arabica L.) chloroplast genome: organization and implications for biotechnology and phylogenetic relationships amongst angiosperms.</title>
        <authorList>
            <person name="Samson N."/>
            <person name="Bausher M.G."/>
            <person name="Lee S.-B."/>
            <person name="Jansen R.K."/>
            <person name="Daniell H."/>
        </authorList>
    </citation>
    <scope>NUCLEOTIDE SEQUENCE [LARGE SCALE GENOMIC DNA]</scope>
</reference>
<keyword id="KW-0150">Chloroplast</keyword>
<keyword id="KW-0472">Membrane</keyword>
<keyword id="KW-0597">Phosphoprotein</keyword>
<keyword id="KW-0602">Photosynthesis</keyword>
<keyword id="KW-0604">Photosystem II</keyword>
<keyword id="KW-0934">Plastid</keyword>
<keyword id="KW-1185">Reference proteome</keyword>
<keyword id="KW-0793">Thylakoid</keyword>
<keyword id="KW-0812">Transmembrane</keyword>
<keyword id="KW-1133">Transmembrane helix</keyword>
<proteinExistence type="inferred from homology"/>
<comment type="function">
    <text evidence="2">One of the components of the core complex of photosystem II (PSII), required for its stability and/or assembly. PSII is a light-driven water:plastoquinone oxidoreductase that uses light energy to abstract electrons from H(2)O, generating O(2) and a proton gradient subsequently used for ATP formation. It consists of a core antenna complex that captures photons, and an electron transfer chain that converts photonic excitation into a charge separation.</text>
</comment>
<comment type="subunit">
    <text evidence="2">PSII is composed of 1 copy each of membrane proteins PsbA, PsbB, PsbC, PsbD, PsbE, PsbF, PsbH, PsbI, PsbJ, PsbK, PsbL, PsbM, PsbT, PsbX, PsbY, PsbZ, Psb30/Ycf12, at least 3 peripheral proteins of the oxygen-evolving complex and a large number of cofactors. It forms dimeric complexes.</text>
</comment>
<comment type="subcellular location">
    <subcellularLocation>
        <location evidence="2">Plastid</location>
        <location evidence="2">Chloroplast thylakoid membrane</location>
        <topology evidence="2">Single-pass membrane protein</topology>
    </subcellularLocation>
</comment>
<comment type="PTM">
    <text evidence="2">Phosphorylation is a light-dependent reaction catalyzed by a membrane-bound kinase; phosphorylation occurs on Thr residue(s) in the N-terminus of the protein.</text>
</comment>
<comment type="similarity">
    <text evidence="2">Belongs to the PsbH family.</text>
</comment>
<evidence type="ECO:0000250" key="1">
    <source>
        <dbReference type="UniProtKB" id="P56780"/>
    </source>
</evidence>
<evidence type="ECO:0000255" key="2">
    <source>
        <dbReference type="HAMAP-Rule" id="MF_00752"/>
    </source>
</evidence>
<evidence type="ECO:0000256" key="3">
    <source>
        <dbReference type="SAM" id="MobiDB-lite"/>
    </source>
</evidence>
<sequence length="73" mass="7747">MATQTVDNSSRSGPRRTTVGSLLKPLNSEYGKVAPGWGTTPLMGVAMALFAVFLSIILEIYNSSVLLDGISMN</sequence>
<dbReference type="EMBL" id="EF044213">
    <property type="protein sequence ID" value="ABJ89707.1"/>
    <property type="molecule type" value="Genomic_DNA"/>
</dbReference>
<dbReference type="RefSeq" id="YP_817511.1">
    <property type="nucleotide sequence ID" value="NC_008535.1"/>
</dbReference>
<dbReference type="SMR" id="A0A364"/>
<dbReference type="GeneID" id="4421757"/>
<dbReference type="OrthoDB" id="1855002at2759"/>
<dbReference type="Proteomes" id="UP000515148">
    <property type="component" value="Chloroplast Pltd"/>
</dbReference>
<dbReference type="GO" id="GO:0009535">
    <property type="term" value="C:chloroplast thylakoid membrane"/>
    <property type="evidence" value="ECO:0007669"/>
    <property type="project" value="UniProtKB-SubCell"/>
</dbReference>
<dbReference type="GO" id="GO:0009523">
    <property type="term" value="C:photosystem II"/>
    <property type="evidence" value="ECO:0007669"/>
    <property type="project" value="UniProtKB-KW"/>
</dbReference>
<dbReference type="GO" id="GO:0042301">
    <property type="term" value="F:phosphate ion binding"/>
    <property type="evidence" value="ECO:0007669"/>
    <property type="project" value="InterPro"/>
</dbReference>
<dbReference type="GO" id="GO:0015979">
    <property type="term" value="P:photosynthesis"/>
    <property type="evidence" value="ECO:0007669"/>
    <property type="project" value="UniProtKB-UniRule"/>
</dbReference>
<dbReference type="GO" id="GO:0050821">
    <property type="term" value="P:protein stabilization"/>
    <property type="evidence" value="ECO:0007669"/>
    <property type="project" value="InterPro"/>
</dbReference>
<dbReference type="FunFam" id="1.20.5.880:FF:000001">
    <property type="entry name" value="Photosystem II reaction center protein H"/>
    <property type="match status" value="1"/>
</dbReference>
<dbReference type="Gene3D" id="1.20.5.880">
    <property type="entry name" value="Photosystem II reaction center protein H"/>
    <property type="match status" value="1"/>
</dbReference>
<dbReference type="HAMAP" id="MF_00752">
    <property type="entry name" value="PSII_PsbH"/>
    <property type="match status" value="1"/>
</dbReference>
<dbReference type="InterPro" id="IPR001056">
    <property type="entry name" value="PSII_PsbH"/>
</dbReference>
<dbReference type="InterPro" id="IPR036863">
    <property type="entry name" value="PSII_PsbH_sf"/>
</dbReference>
<dbReference type="NCBIfam" id="NF002728">
    <property type="entry name" value="PRK02624.1"/>
    <property type="match status" value="1"/>
</dbReference>
<dbReference type="PANTHER" id="PTHR34469">
    <property type="entry name" value="PHOTOSYSTEM II REACTION CENTER PROTEIN H"/>
    <property type="match status" value="1"/>
</dbReference>
<dbReference type="PANTHER" id="PTHR34469:SF4">
    <property type="entry name" value="PHOTOSYSTEM II REACTION CENTER PROTEIN H"/>
    <property type="match status" value="1"/>
</dbReference>
<dbReference type="Pfam" id="PF00737">
    <property type="entry name" value="PsbH"/>
    <property type="match status" value="1"/>
</dbReference>
<dbReference type="SUPFAM" id="SSF161025">
    <property type="entry name" value="Photosystem II 10 kDa phosphoprotein PsbH"/>
    <property type="match status" value="1"/>
</dbReference>
<feature type="initiator methionine" description="Removed" evidence="1">
    <location>
        <position position="1"/>
    </location>
</feature>
<feature type="chain" id="PRO_0000275749" description="Photosystem II reaction center protein H">
    <location>
        <begin position="2"/>
        <end position="73"/>
    </location>
</feature>
<feature type="transmembrane region" description="Helical" evidence="2">
    <location>
        <begin position="41"/>
        <end position="61"/>
    </location>
</feature>
<feature type="region of interest" description="Disordered" evidence="3">
    <location>
        <begin position="1"/>
        <end position="21"/>
    </location>
</feature>
<feature type="compositionally biased region" description="Polar residues" evidence="3">
    <location>
        <begin position="1"/>
        <end position="12"/>
    </location>
</feature>
<feature type="modified residue" description="Phosphothreonine" evidence="2">
    <location>
        <position position="3"/>
    </location>
</feature>
<feature type="modified residue" description="Phosphothreonine" evidence="2">
    <location>
        <position position="5"/>
    </location>
</feature>
<accession>A0A364</accession>